<keyword id="KW-0010">Activator</keyword>
<keyword id="KW-0963">Cytoplasm</keyword>
<keyword id="KW-0238">DNA-binding</keyword>
<keyword id="KW-1185">Reference proteome</keyword>
<keyword id="KW-0804">Transcription</keyword>
<keyword id="KW-0805">Transcription regulation</keyword>
<organism>
    <name type="scientific">Escherichia coli O6:H1 (strain CFT073 / ATCC 700928 / UPEC)</name>
    <dbReference type="NCBI Taxonomy" id="199310"/>
    <lineage>
        <taxon>Bacteria</taxon>
        <taxon>Pseudomonadati</taxon>
        <taxon>Pseudomonadota</taxon>
        <taxon>Gammaproteobacteria</taxon>
        <taxon>Enterobacterales</taxon>
        <taxon>Enterobacteriaceae</taxon>
        <taxon>Escherichia</taxon>
    </lineage>
</organism>
<sequence length="196" mass="23299">MTWQNDYSRDYEVKNHMECQNRSDKYIWSPHDAYFYKGLSELIVDIDRLIYLSLEKIRKDFVFINLNTDSLTEFINRDNEWLSAVKGKQVVLIAARKSEALANYWYYNSNIRGVVYAGLSRDIRKELAYVINGRFLRKDIKKDKITDREMEIIRMTAQGMLPKSIARIENCSVKTVYTHRRNAEAKLYSKLYKLVQ</sequence>
<evidence type="ECO:0000250" key="1"/>
<evidence type="ECO:0000255" key="2">
    <source>
        <dbReference type="PROSITE-ProRule" id="PRU00411"/>
    </source>
</evidence>
<evidence type="ECO:0000305" key="3"/>
<dbReference type="EMBL" id="AE014075">
    <property type="protein sequence ID" value="AAN78886.1"/>
    <property type="molecule type" value="Genomic_DNA"/>
</dbReference>
<dbReference type="SMR" id="Q8FKL2"/>
<dbReference type="STRING" id="199310.c0405"/>
<dbReference type="KEGG" id="ecc:c0405"/>
<dbReference type="eggNOG" id="COG2771">
    <property type="taxonomic scope" value="Bacteria"/>
</dbReference>
<dbReference type="HOGENOM" id="CLU_128111_0_0_6"/>
<dbReference type="BioCyc" id="ECOL199310:C0405-MONOMER"/>
<dbReference type="Proteomes" id="UP000001410">
    <property type="component" value="Chromosome"/>
</dbReference>
<dbReference type="GO" id="GO:0005737">
    <property type="term" value="C:cytoplasm"/>
    <property type="evidence" value="ECO:0007669"/>
    <property type="project" value="UniProtKB-SubCell"/>
</dbReference>
<dbReference type="GO" id="GO:0003677">
    <property type="term" value="F:DNA binding"/>
    <property type="evidence" value="ECO:0007669"/>
    <property type="project" value="UniProtKB-KW"/>
</dbReference>
<dbReference type="GO" id="GO:0006355">
    <property type="term" value="P:regulation of DNA-templated transcription"/>
    <property type="evidence" value="ECO:0007669"/>
    <property type="project" value="InterPro"/>
</dbReference>
<dbReference type="CDD" id="cd06170">
    <property type="entry name" value="LuxR_C_like"/>
    <property type="match status" value="1"/>
</dbReference>
<dbReference type="Gene3D" id="1.10.10.10">
    <property type="entry name" value="Winged helix-like DNA-binding domain superfamily/Winged helix DNA-binding domain"/>
    <property type="match status" value="1"/>
</dbReference>
<dbReference type="InterPro" id="IPR016032">
    <property type="entry name" value="Sig_transdc_resp-reg_C-effctor"/>
</dbReference>
<dbReference type="InterPro" id="IPR000792">
    <property type="entry name" value="Tscrpt_reg_LuxR_C"/>
</dbReference>
<dbReference type="InterPro" id="IPR036388">
    <property type="entry name" value="WH-like_DNA-bd_sf"/>
</dbReference>
<dbReference type="Pfam" id="PF00196">
    <property type="entry name" value="GerE"/>
    <property type="match status" value="1"/>
</dbReference>
<dbReference type="PRINTS" id="PR00038">
    <property type="entry name" value="HTHLUXR"/>
</dbReference>
<dbReference type="SMART" id="SM00421">
    <property type="entry name" value="HTH_LUXR"/>
    <property type="match status" value="1"/>
</dbReference>
<dbReference type="SUPFAM" id="SSF46894">
    <property type="entry name" value="C-terminal effector domain of the bipartite response regulators"/>
    <property type="match status" value="1"/>
</dbReference>
<dbReference type="PROSITE" id="PS50043">
    <property type="entry name" value="HTH_LUXR_2"/>
    <property type="match status" value="1"/>
</dbReference>
<proteinExistence type="inferred from homology"/>
<feature type="chain" id="PRO_0000369183" description="HTH-type transcriptional regulator EcpR">
    <location>
        <begin position="1"/>
        <end position="196"/>
    </location>
</feature>
<feature type="domain" description="HTH luxR-type" evidence="2">
    <location>
        <begin position="138"/>
        <end position="196"/>
    </location>
</feature>
<feature type="DNA-binding region" description="H-T-H motif" evidence="2">
    <location>
        <begin position="162"/>
        <end position="181"/>
    </location>
</feature>
<reference key="1">
    <citation type="journal article" date="2002" name="Proc. Natl. Acad. Sci. U.S.A.">
        <title>Extensive mosaic structure revealed by the complete genome sequence of uropathogenic Escherichia coli.</title>
        <authorList>
            <person name="Welch R.A."/>
            <person name="Burland V."/>
            <person name="Plunkett G. III"/>
            <person name="Redford P."/>
            <person name="Roesch P."/>
            <person name="Rasko D."/>
            <person name="Buckles E.L."/>
            <person name="Liou S.-R."/>
            <person name="Boutin A."/>
            <person name="Hackett J."/>
            <person name="Stroud D."/>
            <person name="Mayhew G.F."/>
            <person name="Rose D.J."/>
            <person name="Zhou S."/>
            <person name="Schwartz D.C."/>
            <person name="Perna N.T."/>
            <person name="Mobley H.L.T."/>
            <person name="Donnenberg M.S."/>
            <person name="Blattner F.R."/>
        </authorList>
    </citation>
    <scope>NUCLEOTIDE SEQUENCE [LARGE SCALE GENOMIC DNA]</scope>
    <source>
        <strain>CFT073 / ATCC 700928 / UPEC</strain>
    </source>
</reference>
<comment type="function">
    <text evidence="1">Part of the ecpRABCDE operon, which encodes the E.coli common pilus (ECP). ECP is found in both commensal and pathogenic strains and plays a dual role in early-stage biofilm development and host cell recognition. Positively regulates the expression of the ecp operon (By similarity).</text>
</comment>
<comment type="subcellular location">
    <subcellularLocation>
        <location evidence="3">Cytoplasm</location>
    </subcellularLocation>
</comment>
<comment type="induction">
    <text evidence="1">Negatively regulated by H-NS. Positively autoregulated. Also positively regulated by IHF (By similarity).</text>
</comment>
<comment type="similarity">
    <text evidence="3">Belongs to the EcpR/MatA family.</text>
</comment>
<protein>
    <recommendedName>
        <fullName>HTH-type transcriptional regulator EcpR</fullName>
    </recommendedName>
</protein>
<name>ECPR_ECOL6</name>
<accession>Q8FKL2</accession>
<gene>
    <name type="primary">ecpR</name>
    <name type="synonym">matA</name>
    <name type="ordered locus">c0405</name>
</gene>